<comment type="function">
    <text evidence="1">Negative regulator of class I heat shock genes (grpE-dnaK-dnaJ and groELS operons). Prevents heat-shock induction of these operons.</text>
</comment>
<comment type="similarity">
    <text evidence="1">Belongs to the HrcA family.</text>
</comment>
<gene>
    <name evidence="1" type="primary">hrcA</name>
    <name type="ordered locus">BCQ_4102</name>
</gene>
<feature type="chain" id="PRO_1000118289" description="Heat-inducible transcription repressor HrcA">
    <location>
        <begin position="1"/>
        <end position="338"/>
    </location>
</feature>
<organism>
    <name type="scientific">Bacillus cereus (strain Q1)</name>
    <dbReference type="NCBI Taxonomy" id="361100"/>
    <lineage>
        <taxon>Bacteria</taxon>
        <taxon>Bacillati</taxon>
        <taxon>Bacillota</taxon>
        <taxon>Bacilli</taxon>
        <taxon>Bacillales</taxon>
        <taxon>Bacillaceae</taxon>
        <taxon>Bacillus</taxon>
        <taxon>Bacillus cereus group</taxon>
    </lineage>
</organism>
<keyword id="KW-0678">Repressor</keyword>
<keyword id="KW-0346">Stress response</keyword>
<keyword id="KW-0804">Transcription</keyword>
<keyword id="KW-0805">Transcription regulation</keyword>
<protein>
    <recommendedName>
        <fullName evidence="1">Heat-inducible transcription repressor HrcA</fullName>
    </recommendedName>
</protein>
<evidence type="ECO:0000255" key="1">
    <source>
        <dbReference type="HAMAP-Rule" id="MF_00081"/>
    </source>
</evidence>
<sequence length="338" mass="37855">MLTERQLLILQTIIDDFIGSAQPVGSRTLAKKDEITFSSATIRNEMADLEELGFIEKTHSSSGRVPSEKGYRFYVDHLLAPQNLPNDEIVQIKDLFAERIFEAEKIAQQSAQILSELTNYTAIVLGPKLSTNKLKNVQIVPLDRQTAVAIIVTDTGHVQSKTITVPESVDLSDLEKMVNILNEKLSGVPMSELHNKIFKEIVTVLRGYVHNYDSAIKILDGTFQVPLSEKIYFGGKANMLSQPEFHDIQKVRSLLTMIDNEAEFYDILRHKQVGIQVKIGRENSATAMEDCSLISATYSIGEEQLGTIAILGPTRMQYSRVISLLQLFTRQITDGLKK</sequence>
<dbReference type="EMBL" id="CP000227">
    <property type="protein sequence ID" value="ACM14529.1"/>
    <property type="molecule type" value="Genomic_DNA"/>
</dbReference>
<dbReference type="SMR" id="B9IY83"/>
<dbReference type="KEGG" id="bcq:BCQ_4102"/>
<dbReference type="HOGENOM" id="CLU_050019_1_0_9"/>
<dbReference type="Proteomes" id="UP000000441">
    <property type="component" value="Chromosome"/>
</dbReference>
<dbReference type="GO" id="GO:0003677">
    <property type="term" value="F:DNA binding"/>
    <property type="evidence" value="ECO:0007669"/>
    <property type="project" value="InterPro"/>
</dbReference>
<dbReference type="GO" id="GO:0045892">
    <property type="term" value="P:negative regulation of DNA-templated transcription"/>
    <property type="evidence" value="ECO:0007669"/>
    <property type="project" value="UniProtKB-UniRule"/>
</dbReference>
<dbReference type="FunFam" id="1.10.10.10:FF:000049">
    <property type="entry name" value="Heat-inducible transcription repressor HrcA"/>
    <property type="match status" value="1"/>
</dbReference>
<dbReference type="FunFam" id="3.30.390.60:FF:000001">
    <property type="entry name" value="Heat-inducible transcription repressor HrcA"/>
    <property type="match status" value="1"/>
</dbReference>
<dbReference type="Gene3D" id="3.30.450.40">
    <property type="match status" value="1"/>
</dbReference>
<dbReference type="Gene3D" id="3.30.390.60">
    <property type="entry name" value="Heat-inducible transcription repressor hrca homolog, domain 3"/>
    <property type="match status" value="1"/>
</dbReference>
<dbReference type="Gene3D" id="1.10.10.10">
    <property type="entry name" value="Winged helix-like DNA-binding domain superfamily/Winged helix DNA-binding domain"/>
    <property type="match status" value="1"/>
</dbReference>
<dbReference type="HAMAP" id="MF_00081">
    <property type="entry name" value="HrcA"/>
    <property type="match status" value="1"/>
</dbReference>
<dbReference type="InterPro" id="IPR029016">
    <property type="entry name" value="GAF-like_dom_sf"/>
</dbReference>
<dbReference type="InterPro" id="IPR002571">
    <property type="entry name" value="HrcA"/>
</dbReference>
<dbReference type="InterPro" id="IPR021153">
    <property type="entry name" value="HrcA_C"/>
</dbReference>
<dbReference type="InterPro" id="IPR036388">
    <property type="entry name" value="WH-like_DNA-bd_sf"/>
</dbReference>
<dbReference type="InterPro" id="IPR036390">
    <property type="entry name" value="WH_DNA-bd_sf"/>
</dbReference>
<dbReference type="InterPro" id="IPR023120">
    <property type="entry name" value="WHTH_transcript_rep_HrcA_IDD"/>
</dbReference>
<dbReference type="NCBIfam" id="TIGR00331">
    <property type="entry name" value="hrcA"/>
    <property type="match status" value="1"/>
</dbReference>
<dbReference type="PANTHER" id="PTHR34824">
    <property type="entry name" value="HEAT-INDUCIBLE TRANSCRIPTION REPRESSOR HRCA"/>
    <property type="match status" value="1"/>
</dbReference>
<dbReference type="PANTHER" id="PTHR34824:SF1">
    <property type="entry name" value="HEAT-INDUCIBLE TRANSCRIPTION REPRESSOR HRCA"/>
    <property type="match status" value="1"/>
</dbReference>
<dbReference type="Pfam" id="PF01628">
    <property type="entry name" value="HrcA"/>
    <property type="match status" value="1"/>
</dbReference>
<dbReference type="PIRSF" id="PIRSF005485">
    <property type="entry name" value="HrcA"/>
    <property type="match status" value="1"/>
</dbReference>
<dbReference type="SUPFAM" id="SSF55781">
    <property type="entry name" value="GAF domain-like"/>
    <property type="match status" value="1"/>
</dbReference>
<dbReference type="SUPFAM" id="SSF46785">
    <property type="entry name" value="Winged helix' DNA-binding domain"/>
    <property type="match status" value="1"/>
</dbReference>
<accession>B9IY83</accession>
<name>HRCA_BACCQ</name>
<reference key="1">
    <citation type="journal article" date="2009" name="J. Bacteriol.">
        <title>Complete genome sequence of the extremophilic Bacillus cereus strain Q1 with industrial applications.</title>
        <authorList>
            <person name="Xiong Z."/>
            <person name="Jiang Y."/>
            <person name="Qi D."/>
            <person name="Lu H."/>
            <person name="Yang F."/>
            <person name="Yang J."/>
            <person name="Chen L."/>
            <person name="Sun L."/>
            <person name="Xu X."/>
            <person name="Xue Y."/>
            <person name="Zhu Y."/>
            <person name="Jin Q."/>
        </authorList>
    </citation>
    <scope>NUCLEOTIDE SEQUENCE [LARGE SCALE GENOMIC DNA]</scope>
    <source>
        <strain>Q1</strain>
    </source>
</reference>
<proteinExistence type="inferred from homology"/>